<protein>
    <recommendedName>
        <fullName>Pyrroline-5-carboxylate reductase</fullName>
        <shortName>P5C reductase</shortName>
        <shortName>P5CR</shortName>
        <ecNumber>1.5.1.2</ecNumber>
    </recommendedName>
</protein>
<dbReference type="EC" id="1.5.1.2"/>
<dbReference type="EMBL" id="U92287">
    <property type="protein sequence ID" value="AAC14482.1"/>
    <property type="molecule type" value="mRNA"/>
</dbReference>
<dbReference type="EMBL" id="NKQK01000020">
    <property type="protein sequence ID" value="PSS01754.1"/>
    <property type="molecule type" value="Genomic_DNA"/>
</dbReference>
<dbReference type="SMR" id="O04016"/>
<dbReference type="FunCoup" id="O04016">
    <property type="interactions" value="2855"/>
</dbReference>
<dbReference type="STRING" id="1590841.O04016"/>
<dbReference type="EnsemblPlants" id="PSS01754">
    <property type="protein sequence ID" value="PSS01754"/>
    <property type="gene ID" value="CEY00_Acc23110"/>
</dbReference>
<dbReference type="Gramene" id="PSS01754">
    <property type="protein sequence ID" value="PSS01754"/>
    <property type="gene ID" value="CEY00_Acc23110"/>
</dbReference>
<dbReference type="InParanoid" id="O04016"/>
<dbReference type="OMA" id="VWAVKPQ"/>
<dbReference type="OrthoDB" id="10263291at2759"/>
<dbReference type="UniPathway" id="UPA00098">
    <property type="reaction ID" value="UER00361"/>
</dbReference>
<dbReference type="Proteomes" id="UP000241394">
    <property type="component" value="Chromosome LG20"/>
</dbReference>
<dbReference type="GO" id="GO:0005737">
    <property type="term" value="C:cytoplasm"/>
    <property type="evidence" value="ECO:0007669"/>
    <property type="project" value="UniProtKB-SubCell"/>
</dbReference>
<dbReference type="GO" id="GO:0004735">
    <property type="term" value="F:pyrroline-5-carboxylate reductase activity"/>
    <property type="evidence" value="ECO:0007669"/>
    <property type="project" value="UniProtKB-EC"/>
</dbReference>
<dbReference type="GO" id="GO:0055129">
    <property type="term" value="P:L-proline biosynthetic process"/>
    <property type="evidence" value="ECO:0007669"/>
    <property type="project" value="UniProtKB-UniPathway"/>
</dbReference>
<dbReference type="FunFam" id="1.10.3730.10:FF:000001">
    <property type="entry name" value="Pyrroline-5-carboxylate reductase"/>
    <property type="match status" value="1"/>
</dbReference>
<dbReference type="FunFam" id="3.40.50.720:FF:000190">
    <property type="entry name" value="Pyrroline-5-carboxylate reductase"/>
    <property type="match status" value="1"/>
</dbReference>
<dbReference type="Gene3D" id="3.40.50.720">
    <property type="entry name" value="NAD(P)-binding Rossmann-like Domain"/>
    <property type="match status" value="1"/>
</dbReference>
<dbReference type="Gene3D" id="1.10.3730.10">
    <property type="entry name" value="ProC C-terminal domain-like"/>
    <property type="match status" value="1"/>
</dbReference>
<dbReference type="HAMAP" id="MF_01925">
    <property type="entry name" value="P5C_reductase"/>
    <property type="match status" value="1"/>
</dbReference>
<dbReference type="InterPro" id="IPR008927">
    <property type="entry name" value="6-PGluconate_DH-like_C_sf"/>
</dbReference>
<dbReference type="InterPro" id="IPR036291">
    <property type="entry name" value="NAD(P)-bd_dom_sf"/>
</dbReference>
<dbReference type="InterPro" id="IPR028939">
    <property type="entry name" value="P5C_Rdtase_cat_N"/>
</dbReference>
<dbReference type="InterPro" id="IPR053790">
    <property type="entry name" value="P5CR-like_CS"/>
</dbReference>
<dbReference type="InterPro" id="IPR029036">
    <property type="entry name" value="P5CR_dimer"/>
</dbReference>
<dbReference type="InterPro" id="IPR000304">
    <property type="entry name" value="Pyrroline-COOH_reductase"/>
</dbReference>
<dbReference type="NCBIfam" id="TIGR00112">
    <property type="entry name" value="proC"/>
    <property type="match status" value="1"/>
</dbReference>
<dbReference type="PANTHER" id="PTHR11645">
    <property type="entry name" value="PYRROLINE-5-CARBOXYLATE REDUCTASE"/>
    <property type="match status" value="1"/>
</dbReference>
<dbReference type="PANTHER" id="PTHR11645:SF0">
    <property type="entry name" value="PYRROLINE-5-CARBOXYLATE REDUCTASE 3"/>
    <property type="match status" value="1"/>
</dbReference>
<dbReference type="Pfam" id="PF03807">
    <property type="entry name" value="F420_oxidored"/>
    <property type="match status" value="1"/>
</dbReference>
<dbReference type="Pfam" id="PF14748">
    <property type="entry name" value="P5CR_dimer"/>
    <property type="match status" value="1"/>
</dbReference>
<dbReference type="PIRSF" id="PIRSF000193">
    <property type="entry name" value="Pyrrol-5-carb_rd"/>
    <property type="match status" value="1"/>
</dbReference>
<dbReference type="SUPFAM" id="SSF48179">
    <property type="entry name" value="6-phosphogluconate dehydrogenase C-terminal domain-like"/>
    <property type="match status" value="1"/>
</dbReference>
<dbReference type="SUPFAM" id="SSF51735">
    <property type="entry name" value="NAD(P)-binding Rossmann-fold domains"/>
    <property type="match status" value="1"/>
</dbReference>
<dbReference type="PROSITE" id="PS00521">
    <property type="entry name" value="P5CR"/>
    <property type="match status" value="1"/>
</dbReference>
<proteinExistence type="evidence at transcript level"/>
<organism>
    <name type="scientific">Actinidia chinensis var. chinensis</name>
    <name type="common">Chinese soft-hair kiwi</name>
    <dbReference type="NCBI Taxonomy" id="1590841"/>
    <lineage>
        <taxon>Eukaryota</taxon>
        <taxon>Viridiplantae</taxon>
        <taxon>Streptophyta</taxon>
        <taxon>Embryophyta</taxon>
        <taxon>Tracheophyta</taxon>
        <taxon>Spermatophyta</taxon>
        <taxon>Magnoliopsida</taxon>
        <taxon>eudicotyledons</taxon>
        <taxon>Gunneridae</taxon>
        <taxon>Pentapetalae</taxon>
        <taxon>asterids</taxon>
        <taxon>Ericales</taxon>
        <taxon>Actinidiaceae</taxon>
        <taxon>Actinidia</taxon>
    </lineage>
</organism>
<name>P5CR_ACTCC</name>
<reference key="1">
    <citation type="submission" date="1997-04" db="EMBL/GenBank/DDBJ databases">
        <authorList>
            <person name="Walton E.F."/>
            <person name="Podivinsky E."/>
            <person name="Wu R.M."/>
            <person name="Reynolds P.H.S."/>
            <person name="Young L.W."/>
        </authorList>
    </citation>
    <scope>NUCLEOTIDE SEQUENCE [MRNA]</scope>
    <source>
        <tissue>Axillary bud</tissue>
    </source>
</reference>
<reference key="2">
    <citation type="journal article" date="2018" name="BMC Genomics">
        <title>A manually annotated Actinidia chinensis var. chinensis (kiwifruit) genome highlights the challenges associated with draft genomes and gene prediction in plants.</title>
        <authorList>
            <person name="Pilkington S.M."/>
            <person name="Crowhurst R."/>
            <person name="Hilario E."/>
            <person name="Nardozza S."/>
            <person name="Fraser L."/>
            <person name="Peng Y."/>
            <person name="Gunaseelan K."/>
            <person name="Simpson R."/>
            <person name="Tahir J."/>
            <person name="Deroles S.C."/>
            <person name="Templeton K."/>
            <person name="Luo Z."/>
            <person name="Davy M."/>
            <person name="Cheng C."/>
            <person name="McNeilage M."/>
            <person name="Scaglione D."/>
            <person name="Liu Y."/>
            <person name="Zhang Q."/>
            <person name="Datson P."/>
            <person name="De Silva N."/>
            <person name="Gardiner S.E."/>
            <person name="Bassett H."/>
            <person name="Chagne D."/>
            <person name="McCallum J."/>
            <person name="Dzierzon H."/>
            <person name="Deng C."/>
            <person name="Wang Y.Y."/>
            <person name="Barron L."/>
            <person name="Manako K."/>
            <person name="Bowen J."/>
            <person name="Foster T.M."/>
            <person name="Erridge Z.A."/>
            <person name="Tiffin H."/>
            <person name="Waite C.N."/>
            <person name="Davies K.M."/>
            <person name="Grierson E.P."/>
            <person name="Laing W.A."/>
            <person name="Kirk R."/>
            <person name="Chen X."/>
            <person name="Wood M."/>
            <person name="Montefiori M."/>
            <person name="Brummell D.A."/>
            <person name="Schwinn K.E."/>
            <person name="Catanach A."/>
            <person name="Fullerton C."/>
            <person name="Li D."/>
            <person name="Meiyalaghan S."/>
            <person name="Nieuwenhuizen N."/>
            <person name="Read N."/>
            <person name="Prakash R."/>
            <person name="Hunter D."/>
            <person name="Zhang H."/>
            <person name="McKenzie M."/>
            <person name="Knabel M."/>
            <person name="Harris A."/>
            <person name="Allan A.C."/>
            <person name="Gleave A."/>
            <person name="Chen A."/>
            <person name="Janssen B.J."/>
            <person name="Plunkett B."/>
            <person name="Ampomah-Dwamena C."/>
            <person name="Voogd C."/>
            <person name="Leif D."/>
            <person name="Lafferty D."/>
            <person name="Souleyre E.J.F."/>
            <person name="Varkonyi-Gasic E."/>
            <person name="Gambi F."/>
            <person name="Hanley J."/>
            <person name="Yao J.L."/>
            <person name="Cheung J."/>
            <person name="David K.M."/>
            <person name="Warren B."/>
            <person name="Marsh K."/>
            <person name="Snowden K.C."/>
            <person name="Lin-Wang K."/>
            <person name="Brian L."/>
            <person name="Martinez-Sanchez M."/>
            <person name="Wang M."/>
            <person name="Ileperuma N."/>
            <person name="Macnee N."/>
            <person name="Campin R."/>
            <person name="McAtee P."/>
            <person name="Drummond R.S.M."/>
            <person name="Espley R.V."/>
            <person name="Ireland H.S."/>
            <person name="Wu R."/>
            <person name="Atkinson R.G."/>
            <person name="Karunairetnam S."/>
            <person name="Bulley S."/>
            <person name="Chunkath S."/>
            <person name="Hanley Z."/>
            <person name="Storey R."/>
            <person name="Thrimawithana A.H."/>
            <person name="Thomson S."/>
            <person name="David C."/>
            <person name="Testolin R."/>
            <person name="Huang H."/>
            <person name="Hellens R.P."/>
            <person name="Schaffer R.J."/>
        </authorList>
    </citation>
    <scope>NUCLEOTIDE SEQUENCE [LARGE SCALE GENOMIC DNA]</scope>
    <source>
        <strain>cv. Red5</strain>
    </source>
</reference>
<sequence>MAAAAFVPIPTDTYKLGFIGAGKMAESIARGVVKSGVLPASRIRTAHLGSARRDAFESFGVKVLDRNDQVVEDSDVIIFSVKPQIVKEVVLQLRPLLSEKQLLVSIVAGVKLKELEDWAGHSRFIRVMPNTPAAVGEAASVMSLGATATGEDGELITKLFGAIGKIWKADEKLFDAVTGLSGSGPAYIFLAIEALADGGVAAGLPRELALGLASQTVLGAASMVARGGKHPGQLKDDVASAGGTTIAGIHELEKGGFRGTLMNAVVSATKRSQEIFKR</sequence>
<comment type="catalytic activity">
    <reaction>
        <text>L-proline + NADP(+) = (S)-1-pyrroline-5-carboxylate + NADPH + 2 H(+)</text>
        <dbReference type="Rhea" id="RHEA:14109"/>
        <dbReference type="ChEBI" id="CHEBI:15378"/>
        <dbReference type="ChEBI" id="CHEBI:17388"/>
        <dbReference type="ChEBI" id="CHEBI:57783"/>
        <dbReference type="ChEBI" id="CHEBI:58349"/>
        <dbReference type="ChEBI" id="CHEBI:60039"/>
        <dbReference type="EC" id="1.5.1.2"/>
    </reaction>
</comment>
<comment type="catalytic activity">
    <reaction>
        <text>L-proline + NAD(+) = (S)-1-pyrroline-5-carboxylate + NADH + 2 H(+)</text>
        <dbReference type="Rhea" id="RHEA:14105"/>
        <dbReference type="ChEBI" id="CHEBI:15378"/>
        <dbReference type="ChEBI" id="CHEBI:17388"/>
        <dbReference type="ChEBI" id="CHEBI:57540"/>
        <dbReference type="ChEBI" id="CHEBI:57945"/>
        <dbReference type="ChEBI" id="CHEBI:60039"/>
        <dbReference type="EC" id="1.5.1.2"/>
    </reaction>
</comment>
<comment type="pathway">
    <text>Amino-acid biosynthesis; L-proline biosynthesis; L-proline from L-glutamate 5-semialdehyde: step 1/1.</text>
</comment>
<comment type="subcellular location">
    <subcellularLocation>
        <location>Cytoplasm</location>
    </subcellularLocation>
</comment>
<comment type="similarity">
    <text evidence="1">Belongs to the pyrroline-5-carboxylate reductase family.</text>
</comment>
<evidence type="ECO:0000305" key="1"/>
<evidence type="ECO:0000312" key="2">
    <source>
        <dbReference type="EMBL" id="PSS01754.1"/>
    </source>
</evidence>
<feature type="chain" id="PRO_0000187322" description="Pyrroline-5-carboxylate reductase">
    <location>
        <begin position="1"/>
        <end position="278"/>
    </location>
</feature>
<feature type="sequence conflict" description="In Ref. 1; AAC14482." evidence="1" ref="1">
    <original>D</original>
    <variation>E</variation>
    <location>
        <position position="54"/>
    </location>
</feature>
<keyword id="KW-0028">Amino-acid biosynthesis</keyword>
<keyword id="KW-0963">Cytoplasm</keyword>
<keyword id="KW-0521">NADP</keyword>
<keyword id="KW-0560">Oxidoreductase</keyword>
<keyword id="KW-0641">Proline biosynthesis</keyword>
<keyword id="KW-1185">Reference proteome</keyword>
<accession>O04016</accession>
<accession>A0A2R6Q4E2</accession>
<gene>
    <name evidence="2" type="ORF">CEY00_Acc23110</name>
</gene>